<keyword id="KW-0966">Cell projection</keyword>
<keyword id="KW-0970">Cilium biogenesis/degradation</keyword>
<keyword id="KW-0963">Cytoplasm</keyword>
<keyword id="KW-0206">Cytoskeleton</keyword>
<keyword id="KW-0217">Developmental protein</keyword>
<keyword id="KW-0597">Phosphoprotein</keyword>
<keyword id="KW-1185">Reference proteome</keyword>
<name>INTU_RAT</name>
<feature type="chain" id="PRO_0000416284" description="Protein inturned">
    <location>
        <begin position="1"/>
        <end position="942"/>
    </location>
</feature>
<feature type="domain" description="PDZ" evidence="4">
    <location>
        <begin position="189"/>
        <end position="267"/>
    </location>
</feature>
<feature type="region of interest" description="Disordered" evidence="5">
    <location>
        <begin position="1"/>
        <end position="54"/>
    </location>
</feature>
<feature type="region of interest" description="Disordered" evidence="5">
    <location>
        <begin position="129"/>
        <end position="150"/>
    </location>
</feature>
<feature type="region of interest" description="Disordered" evidence="5">
    <location>
        <begin position="707"/>
        <end position="752"/>
    </location>
</feature>
<feature type="compositionally biased region" description="Basic and acidic residues" evidence="5">
    <location>
        <begin position="1"/>
        <end position="13"/>
    </location>
</feature>
<feature type="compositionally biased region" description="Acidic residues" evidence="5">
    <location>
        <begin position="22"/>
        <end position="32"/>
    </location>
</feature>
<feature type="compositionally biased region" description="Low complexity" evidence="5">
    <location>
        <begin position="33"/>
        <end position="48"/>
    </location>
</feature>
<feature type="compositionally biased region" description="Polar residues" evidence="5">
    <location>
        <begin position="138"/>
        <end position="150"/>
    </location>
</feature>
<feature type="modified residue" description="Phosphoserine" evidence="7">
    <location>
        <position position="674"/>
    </location>
</feature>
<feature type="modified residue" description="Phosphoserine" evidence="3">
    <location>
        <position position="678"/>
    </location>
</feature>
<organism>
    <name type="scientific">Rattus norvegicus</name>
    <name type="common">Rat</name>
    <dbReference type="NCBI Taxonomy" id="10116"/>
    <lineage>
        <taxon>Eukaryota</taxon>
        <taxon>Metazoa</taxon>
        <taxon>Chordata</taxon>
        <taxon>Craniata</taxon>
        <taxon>Vertebrata</taxon>
        <taxon>Euteleostomi</taxon>
        <taxon>Mammalia</taxon>
        <taxon>Eutheria</taxon>
        <taxon>Euarchontoglires</taxon>
        <taxon>Glires</taxon>
        <taxon>Rodentia</taxon>
        <taxon>Myomorpha</taxon>
        <taxon>Muroidea</taxon>
        <taxon>Muridae</taxon>
        <taxon>Murinae</taxon>
        <taxon>Rattus</taxon>
    </lineage>
</organism>
<evidence type="ECO:0000250" key="1">
    <source>
        <dbReference type="UniProtKB" id="Q059U7"/>
    </source>
</evidence>
<evidence type="ECO:0000250" key="2">
    <source>
        <dbReference type="UniProtKB" id="Q2I0E5"/>
    </source>
</evidence>
<evidence type="ECO:0000250" key="3">
    <source>
        <dbReference type="UniProtKB" id="Q9ULD6"/>
    </source>
</evidence>
<evidence type="ECO:0000255" key="4">
    <source>
        <dbReference type="PROSITE-ProRule" id="PRU00143"/>
    </source>
</evidence>
<evidence type="ECO:0000256" key="5">
    <source>
        <dbReference type="SAM" id="MobiDB-lite"/>
    </source>
</evidence>
<evidence type="ECO:0000305" key="6"/>
<evidence type="ECO:0007744" key="7">
    <source>
    </source>
</evidence>
<sequence length="942" mass="105142">MADPARRDPRGRAPELPGDLSSQEEEEEESDSDAGASSLGSCSSASSDTDLEPEWLDSVQRNGELFYLELSEDEEESLLPETQTVNHVNHVRFSEKEVIIEEDDSRERKKYEPKLRRFTKILKSKSLLPKRHHKKKSSNTGPVSILKHQSTQRTGVTVQQRYKDVTVYINPKKLTAIKAREQAKLLEVLVGVIHQTKWSWKRSGKQADGERLVVHGLVPGGSAMKSGQVLVGDVLVAVNDVDVTSENIERVLSCIPGPMQVKLTFENAYAVKKETAQPKKKKAQSSTNDLVKLLCGSEADATQHSTLSIPHITMYLTLQLQSEVAREEQEMLYHYPVSEASQKLKSVRGIFLTLCDMLESVTGTQVTSSSLHVNGKQIHVAYLKESDKLLLIGLPAEEVPLPQLRNMTEDVAQTLKFMYGSLDSAFCQVENTPRLDHFFSLFFERALRPGKLHLSASPSAQQYDAASAVLLDNLPGVRWLLLPQELKVELDTALSDLEAADFQELSEDYYDMRRLYTILGSSLFYKGYMVCSHLPKDDVVEIAAYCRQYCLLPLAAQQRIGQLIIWREVFPQHHLQPATDSDPEAFQEPEGRYFLLIVGLRHYMLCVLLEAGGCASKATGNPGPDCIYVDQARATLHQLEGVESRIEEQLAATPGPCLSCADWFLAAPREKADSLTTSPILGRLQGPSKTAASPTCRRTFFSDYSFKARKPSPSRIGGGREPGEGEENVGLSPHTTPDTVRKQRESEGSDDNVALLKLARKKSTLPNPFHLGTSKKELSEKELEVYNMMKLTSGPENTLFHYVALETVQGIFITPTHEEVAQLGGSVHSQLIKNFHRCCLTIRAVFQQTLKVEKKKALSDGDHLESANSVSSLSPVKEHGVLFECSPENWTDQKKTPPVMSYWVVGRLFLNPKPQELYVCFHDSVSEIAIEMAFRLFFGLTL</sequence>
<accession>D4ACE5</accession>
<gene>
    <name type="primary">Intu</name>
    <name type="synonym">Pdzd6</name>
</gene>
<proteinExistence type="evidence at protein level"/>
<reference key="1">
    <citation type="journal article" date="2004" name="Nature">
        <title>Genome sequence of the Brown Norway rat yields insights into mammalian evolution.</title>
        <authorList>
            <person name="Gibbs R.A."/>
            <person name="Weinstock G.M."/>
            <person name="Metzker M.L."/>
            <person name="Muzny D.M."/>
            <person name="Sodergren E.J."/>
            <person name="Scherer S."/>
            <person name="Scott G."/>
            <person name="Steffen D."/>
            <person name="Worley K.C."/>
            <person name="Burch P.E."/>
            <person name="Okwuonu G."/>
            <person name="Hines S."/>
            <person name="Lewis L."/>
            <person name="Deramo C."/>
            <person name="Delgado O."/>
            <person name="Dugan-Rocha S."/>
            <person name="Miner G."/>
            <person name="Morgan M."/>
            <person name="Hawes A."/>
            <person name="Gill R."/>
            <person name="Holt R.A."/>
            <person name="Adams M.D."/>
            <person name="Amanatides P.G."/>
            <person name="Baden-Tillson H."/>
            <person name="Barnstead M."/>
            <person name="Chin S."/>
            <person name="Evans C.A."/>
            <person name="Ferriera S."/>
            <person name="Fosler C."/>
            <person name="Glodek A."/>
            <person name="Gu Z."/>
            <person name="Jennings D."/>
            <person name="Kraft C.L."/>
            <person name="Nguyen T."/>
            <person name="Pfannkoch C.M."/>
            <person name="Sitter C."/>
            <person name="Sutton G.G."/>
            <person name="Venter J.C."/>
            <person name="Woodage T."/>
            <person name="Smith D."/>
            <person name="Lee H.-M."/>
            <person name="Gustafson E."/>
            <person name="Cahill P."/>
            <person name="Kana A."/>
            <person name="Doucette-Stamm L."/>
            <person name="Weinstock K."/>
            <person name="Fechtel K."/>
            <person name="Weiss R.B."/>
            <person name="Dunn D.M."/>
            <person name="Green E.D."/>
            <person name="Blakesley R.W."/>
            <person name="Bouffard G.G."/>
            <person name="De Jong P.J."/>
            <person name="Osoegawa K."/>
            <person name="Zhu B."/>
            <person name="Marra M."/>
            <person name="Schein J."/>
            <person name="Bosdet I."/>
            <person name="Fjell C."/>
            <person name="Jones S."/>
            <person name="Krzywinski M."/>
            <person name="Mathewson C."/>
            <person name="Siddiqui A."/>
            <person name="Wye N."/>
            <person name="McPherson J."/>
            <person name="Zhao S."/>
            <person name="Fraser C.M."/>
            <person name="Shetty J."/>
            <person name="Shatsman S."/>
            <person name="Geer K."/>
            <person name="Chen Y."/>
            <person name="Abramzon S."/>
            <person name="Nierman W.C."/>
            <person name="Havlak P.H."/>
            <person name="Chen R."/>
            <person name="Durbin K.J."/>
            <person name="Egan A."/>
            <person name="Ren Y."/>
            <person name="Song X.-Z."/>
            <person name="Li B."/>
            <person name="Liu Y."/>
            <person name="Qin X."/>
            <person name="Cawley S."/>
            <person name="Cooney A.J."/>
            <person name="D'Souza L.M."/>
            <person name="Martin K."/>
            <person name="Wu J.Q."/>
            <person name="Gonzalez-Garay M.L."/>
            <person name="Jackson A.R."/>
            <person name="Kalafus K.J."/>
            <person name="McLeod M.P."/>
            <person name="Milosavljevic A."/>
            <person name="Virk D."/>
            <person name="Volkov A."/>
            <person name="Wheeler D.A."/>
            <person name="Zhang Z."/>
            <person name="Bailey J.A."/>
            <person name="Eichler E.E."/>
            <person name="Tuzun E."/>
            <person name="Birney E."/>
            <person name="Mongin E."/>
            <person name="Ureta-Vidal A."/>
            <person name="Woodwark C."/>
            <person name="Zdobnov E."/>
            <person name="Bork P."/>
            <person name="Suyama M."/>
            <person name="Torrents D."/>
            <person name="Alexandersson M."/>
            <person name="Trask B.J."/>
            <person name="Young J.M."/>
            <person name="Huang H."/>
            <person name="Wang H."/>
            <person name="Xing H."/>
            <person name="Daniels S."/>
            <person name="Gietzen D."/>
            <person name="Schmidt J."/>
            <person name="Stevens K."/>
            <person name="Vitt U."/>
            <person name="Wingrove J."/>
            <person name="Camara F."/>
            <person name="Mar Alba M."/>
            <person name="Abril J.F."/>
            <person name="Guigo R."/>
            <person name="Smit A."/>
            <person name="Dubchak I."/>
            <person name="Rubin E.M."/>
            <person name="Couronne O."/>
            <person name="Poliakov A."/>
            <person name="Huebner N."/>
            <person name="Ganten D."/>
            <person name="Goesele C."/>
            <person name="Hummel O."/>
            <person name="Kreitler T."/>
            <person name="Lee Y.-A."/>
            <person name="Monti J."/>
            <person name="Schulz H."/>
            <person name="Zimdahl H."/>
            <person name="Himmelbauer H."/>
            <person name="Lehrach H."/>
            <person name="Jacob H.J."/>
            <person name="Bromberg S."/>
            <person name="Gullings-Handley J."/>
            <person name="Jensen-Seaman M.I."/>
            <person name="Kwitek A.E."/>
            <person name="Lazar J."/>
            <person name="Pasko D."/>
            <person name="Tonellato P.J."/>
            <person name="Twigger S."/>
            <person name="Ponting C.P."/>
            <person name="Duarte J.M."/>
            <person name="Rice S."/>
            <person name="Goodstadt L."/>
            <person name="Beatson S.A."/>
            <person name="Emes R.D."/>
            <person name="Winter E.E."/>
            <person name="Webber C."/>
            <person name="Brandt P."/>
            <person name="Nyakatura G."/>
            <person name="Adetobi M."/>
            <person name="Chiaromonte F."/>
            <person name="Elnitski L."/>
            <person name="Eswara P."/>
            <person name="Hardison R.C."/>
            <person name="Hou M."/>
            <person name="Kolbe D."/>
            <person name="Makova K."/>
            <person name="Miller W."/>
            <person name="Nekrutenko A."/>
            <person name="Riemer C."/>
            <person name="Schwartz S."/>
            <person name="Taylor J."/>
            <person name="Yang S."/>
            <person name="Zhang Y."/>
            <person name="Lindpaintner K."/>
            <person name="Andrews T.D."/>
            <person name="Caccamo M."/>
            <person name="Clamp M."/>
            <person name="Clarke L."/>
            <person name="Curwen V."/>
            <person name="Durbin R.M."/>
            <person name="Eyras E."/>
            <person name="Searle S.M."/>
            <person name="Cooper G.M."/>
            <person name="Batzoglou S."/>
            <person name="Brudno M."/>
            <person name="Sidow A."/>
            <person name="Stone E.A."/>
            <person name="Payseur B.A."/>
            <person name="Bourque G."/>
            <person name="Lopez-Otin C."/>
            <person name="Puente X.S."/>
            <person name="Chakrabarti K."/>
            <person name="Chatterji S."/>
            <person name="Dewey C."/>
            <person name="Pachter L."/>
            <person name="Bray N."/>
            <person name="Yap V.B."/>
            <person name="Caspi A."/>
            <person name="Tesler G."/>
            <person name="Pevzner P.A."/>
            <person name="Haussler D."/>
            <person name="Roskin K.M."/>
            <person name="Baertsch R."/>
            <person name="Clawson H."/>
            <person name="Furey T.S."/>
            <person name="Hinrichs A.S."/>
            <person name="Karolchik D."/>
            <person name="Kent W.J."/>
            <person name="Rosenbloom K.R."/>
            <person name="Trumbower H."/>
            <person name="Weirauch M."/>
            <person name="Cooper D.N."/>
            <person name="Stenson P.D."/>
            <person name="Ma B."/>
            <person name="Brent M."/>
            <person name="Arumugam M."/>
            <person name="Shteynberg D."/>
            <person name="Copley R.R."/>
            <person name="Taylor M.S."/>
            <person name="Riethman H."/>
            <person name="Mudunuri U."/>
            <person name="Peterson J."/>
            <person name="Guyer M."/>
            <person name="Felsenfeld A."/>
            <person name="Old S."/>
            <person name="Mockrin S."/>
            <person name="Collins F.S."/>
        </authorList>
    </citation>
    <scope>NUCLEOTIDE SEQUENCE [LARGE SCALE GENOMIC DNA]</scope>
    <source>
        <strain>Brown Norway</strain>
    </source>
</reference>
<reference key="2">
    <citation type="journal article" date="2012" name="Nat. Commun.">
        <title>Quantitative maps of protein phosphorylation sites across 14 different rat organs and tissues.</title>
        <authorList>
            <person name="Lundby A."/>
            <person name="Secher A."/>
            <person name="Lage K."/>
            <person name="Nordsborg N.B."/>
            <person name="Dmytriyev A."/>
            <person name="Lundby C."/>
            <person name="Olsen J.V."/>
        </authorList>
    </citation>
    <scope>PHOSPHORYLATION [LARGE SCALE ANALYSIS] AT SER-674</scope>
    <scope>IDENTIFICATION BY MASS SPECTROMETRY [LARGE SCALE ANALYSIS]</scope>
</reference>
<protein>
    <recommendedName>
        <fullName>Protein inturned</fullName>
    </recommendedName>
    <alternativeName>
        <fullName>Inturned planar cell polarity effector homolog</fullName>
    </alternativeName>
    <alternativeName>
        <fullName>PDZ domain-containing protein 6</fullName>
    </alternativeName>
</protein>
<dbReference type="SMR" id="D4ACE5"/>
<dbReference type="FunCoup" id="D4ACE5">
    <property type="interactions" value="2051"/>
</dbReference>
<dbReference type="STRING" id="10116.ENSRNOP00000065417"/>
<dbReference type="GlyGen" id="D4ACE5">
    <property type="glycosylation" value="1 site"/>
</dbReference>
<dbReference type="iPTMnet" id="D4ACE5"/>
<dbReference type="PhosphoSitePlus" id="D4ACE5"/>
<dbReference type="UCSC" id="RGD:1309446">
    <property type="organism name" value="rat"/>
</dbReference>
<dbReference type="AGR" id="RGD:1309446"/>
<dbReference type="RGD" id="1309446">
    <property type="gene designation" value="Intu"/>
</dbReference>
<dbReference type="InParanoid" id="D4ACE5"/>
<dbReference type="PhylomeDB" id="D4ACE5"/>
<dbReference type="TreeFam" id="TF323932"/>
<dbReference type="Reactome" id="R-RNO-5610787">
    <property type="pathway name" value="Hedgehog 'off' state"/>
</dbReference>
<dbReference type="PRO" id="PR:D4ACE5"/>
<dbReference type="Proteomes" id="UP000002494">
    <property type="component" value="Unplaced"/>
</dbReference>
<dbReference type="GO" id="GO:0009986">
    <property type="term" value="C:cell surface"/>
    <property type="evidence" value="ECO:0007669"/>
    <property type="project" value="UniProtKB-SubCell"/>
</dbReference>
<dbReference type="GO" id="GO:0005814">
    <property type="term" value="C:centriole"/>
    <property type="evidence" value="ECO:0000266"/>
    <property type="project" value="RGD"/>
</dbReference>
<dbReference type="GO" id="GO:0036064">
    <property type="term" value="C:ciliary basal body"/>
    <property type="evidence" value="ECO:0000266"/>
    <property type="project" value="RGD"/>
</dbReference>
<dbReference type="GO" id="GO:0035869">
    <property type="term" value="C:ciliary transition zone"/>
    <property type="evidence" value="ECO:0000266"/>
    <property type="project" value="RGD"/>
</dbReference>
<dbReference type="GO" id="GO:0005929">
    <property type="term" value="C:cilium"/>
    <property type="evidence" value="ECO:0000318"/>
    <property type="project" value="GO_Central"/>
</dbReference>
<dbReference type="GO" id="GO:0005737">
    <property type="term" value="C:cytoplasm"/>
    <property type="evidence" value="ECO:0000250"/>
    <property type="project" value="UniProtKB"/>
</dbReference>
<dbReference type="GO" id="GO:0031514">
    <property type="term" value="C:motile cilium"/>
    <property type="evidence" value="ECO:0000266"/>
    <property type="project" value="RGD"/>
</dbReference>
<dbReference type="GO" id="GO:0035091">
    <property type="term" value="F:phosphatidylinositol binding"/>
    <property type="evidence" value="ECO:0000250"/>
    <property type="project" value="UniProtKB"/>
</dbReference>
<dbReference type="GO" id="GO:0051301">
    <property type="term" value="P:cell division"/>
    <property type="evidence" value="ECO:0000266"/>
    <property type="project" value="RGD"/>
</dbReference>
<dbReference type="GO" id="GO:0060271">
    <property type="term" value="P:cilium assembly"/>
    <property type="evidence" value="ECO:0000250"/>
    <property type="project" value="UniProtKB"/>
</dbReference>
<dbReference type="GO" id="GO:0042733">
    <property type="term" value="P:embryonic digit morphogenesis"/>
    <property type="evidence" value="ECO:0000266"/>
    <property type="project" value="RGD"/>
</dbReference>
<dbReference type="GO" id="GO:0001736">
    <property type="term" value="P:establishment of planar polarity"/>
    <property type="evidence" value="ECO:0007669"/>
    <property type="project" value="InterPro"/>
</dbReference>
<dbReference type="GO" id="GO:0031069">
    <property type="term" value="P:hair follicle morphogenesis"/>
    <property type="evidence" value="ECO:0000266"/>
    <property type="project" value="RGD"/>
</dbReference>
<dbReference type="GO" id="GO:0030216">
    <property type="term" value="P:keratinocyte differentiation"/>
    <property type="evidence" value="ECO:0000266"/>
    <property type="project" value="RGD"/>
</dbReference>
<dbReference type="GO" id="GO:0060173">
    <property type="term" value="P:limb development"/>
    <property type="evidence" value="ECO:0000250"/>
    <property type="project" value="UniProtKB"/>
</dbReference>
<dbReference type="GO" id="GO:0044458">
    <property type="term" value="P:motile cilium assembly"/>
    <property type="evidence" value="ECO:0000266"/>
    <property type="project" value="RGD"/>
</dbReference>
<dbReference type="GO" id="GO:0051782">
    <property type="term" value="P:negative regulation of cell division"/>
    <property type="evidence" value="ECO:0000266"/>
    <property type="project" value="RGD"/>
</dbReference>
<dbReference type="GO" id="GO:0010839">
    <property type="term" value="P:negative regulation of keratinocyte proliferation"/>
    <property type="evidence" value="ECO:0000266"/>
    <property type="project" value="RGD"/>
</dbReference>
<dbReference type="GO" id="GO:0007399">
    <property type="term" value="P:nervous system development"/>
    <property type="evidence" value="ECO:0000250"/>
    <property type="project" value="UniProtKB"/>
</dbReference>
<dbReference type="GO" id="GO:0021915">
    <property type="term" value="P:neural tube development"/>
    <property type="evidence" value="ECO:0000266"/>
    <property type="project" value="RGD"/>
</dbReference>
<dbReference type="GO" id="GO:1905515">
    <property type="term" value="P:non-motile cilium assembly"/>
    <property type="evidence" value="ECO:0000266"/>
    <property type="project" value="RGD"/>
</dbReference>
<dbReference type="GO" id="GO:0045880">
    <property type="term" value="P:positive regulation of smoothened signaling pathway"/>
    <property type="evidence" value="ECO:0000266"/>
    <property type="project" value="RGD"/>
</dbReference>
<dbReference type="GO" id="GO:0033365">
    <property type="term" value="P:protein localization to organelle"/>
    <property type="evidence" value="ECO:0000266"/>
    <property type="project" value="RGD"/>
</dbReference>
<dbReference type="GO" id="GO:0030278">
    <property type="term" value="P:regulation of ossification"/>
    <property type="evidence" value="ECO:0000266"/>
    <property type="project" value="RGD"/>
</dbReference>
<dbReference type="GO" id="GO:0008589">
    <property type="term" value="P:regulation of smoothened signaling pathway"/>
    <property type="evidence" value="ECO:0000250"/>
    <property type="project" value="UniProtKB"/>
</dbReference>
<dbReference type="GO" id="GO:0060021">
    <property type="term" value="P:roof of mouth development"/>
    <property type="evidence" value="ECO:0000266"/>
    <property type="project" value="RGD"/>
</dbReference>
<dbReference type="GO" id="GO:0007224">
    <property type="term" value="P:smoothened signaling pathway"/>
    <property type="evidence" value="ECO:0000266"/>
    <property type="project" value="RGD"/>
</dbReference>
<dbReference type="GO" id="GO:0021513">
    <property type="term" value="P:spinal cord dorsal/ventral patterning"/>
    <property type="evidence" value="ECO:0000266"/>
    <property type="project" value="RGD"/>
</dbReference>
<dbReference type="GO" id="GO:0043587">
    <property type="term" value="P:tongue morphogenesis"/>
    <property type="evidence" value="ECO:0000266"/>
    <property type="project" value="RGD"/>
</dbReference>
<dbReference type="GO" id="GO:0016192">
    <property type="term" value="P:vesicle-mediated transport"/>
    <property type="evidence" value="ECO:0007669"/>
    <property type="project" value="InterPro"/>
</dbReference>
<dbReference type="Gene3D" id="2.30.42.10">
    <property type="match status" value="1"/>
</dbReference>
<dbReference type="InterPro" id="IPR043987">
    <property type="entry name" value="CCZ1/INTU/HSP4_longin_1"/>
</dbReference>
<dbReference type="InterPro" id="IPR043989">
    <property type="entry name" value="CCZ1/INTU/HSP4_longin_3"/>
</dbReference>
<dbReference type="InterPro" id="IPR043988">
    <property type="entry name" value="CCZ1/INTU_longin_2"/>
</dbReference>
<dbReference type="InterPro" id="IPR039151">
    <property type="entry name" value="INTU"/>
</dbReference>
<dbReference type="InterPro" id="IPR001478">
    <property type="entry name" value="PDZ"/>
</dbReference>
<dbReference type="InterPro" id="IPR036034">
    <property type="entry name" value="PDZ_sf"/>
</dbReference>
<dbReference type="PANTHER" id="PTHR21082">
    <property type="entry name" value="PROTEIN INTURNED"/>
    <property type="match status" value="1"/>
</dbReference>
<dbReference type="PANTHER" id="PTHR21082:SF4">
    <property type="entry name" value="PROTEIN INTURNED"/>
    <property type="match status" value="1"/>
</dbReference>
<dbReference type="Pfam" id="PF19031">
    <property type="entry name" value="Intu_longin_1"/>
    <property type="match status" value="1"/>
</dbReference>
<dbReference type="Pfam" id="PF19032">
    <property type="entry name" value="Intu_longin_2"/>
    <property type="match status" value="1"/>
</dbReference>
<dbReference type="Pfam" id="PF19033">
    <property type="entry name" value="Intu_longin_3"/>
    <property type="match status" value="1"/>
</dbReference>
<dbReference type="SMART" id="SM00228">
    <property type="entry name" value="PDZ"/>
    <property type="match status" value="1"/>
</dbReference>
<dbReference type="SUPFAM" id="SSF50156">
    <property type="entry name" value="PDZ domain-like"/>
    <property type="match status" value="1"/>
</dbReference>
<dbReference type="PROSITE" id="PS50106">
    <property type="entry name" value="PDZ"/>
    <property type="match status" value="1"/>
</dbReference>
<comment type="function">
    <text evidence="1 2">Plays a key role in ciliogenesis and embryonic development. Regulator of cilia formation by controlling the organization of the apical actin cytoskeleton and the positioning of the basal bodies at the apical cell surface, which in turn is essential for the normal orientation of elongating ciliary microtubules. Plays a key role in definition of cell polarity via its role in ciliogenesis but not via conversion extension. Has an indirect effect on hedgehog signaling (By similarity). Proposed to function as core component of the CPLANE (ciliogenesis and planar polarity effectors) complex involved in the recruitment of peripheral IFT-A proteins to basal bodies. Required for recruitment of CPLANE2 to the mother centriole. Binds phosphatidylinositol 3-phosphate with highest affinity, followed by phosphatidylinositol 4-phosphate and phosphatidylinositol 5-phosphate (By similarity).</text>
</comment>
<comment type="subunit">
    <text evidence="1 3">Component of the CPLANE (ciliogenesis and planar polarity effectors) complex, composed of INTU, FUZ and WDPCP. Interacts with CPLANE1. Interacts with NPHP4 and DAAM1; INTU is mediating the interaction between NPHP4 and DAAM1.</text>
</comment>
<comment type="subcellular location">
    <subcellularLocation>
        <location evidence="1">Cytoplasm</location>
    </subcellularLocation>
    <subcellularLocation>
        <location evidence="2">Cell surface</location>
    </subcellularLocation>
    <subcellularLocation>
        <location evidence="2">Cytoplasm</location>
        <location evidence="2">Cytoskeleton</location>
        <location evidence="2">Cilium basal body</location>
    </subcellularLocation>
    <subcellularLocation>
        <location evidence="1">Cytoplasm</location>
        <location evidence="1">Cytoskeleton</location>
        <location evidence="1">Microtubule organizing center</location>
        <location evidence="1">Centrosome</location>
        <location evidence="1">Centriole</location>
    </subcellularLocation>
    <text evidence="1 2">Enriched at the apical surface in ciliated cells. Localizes at the transition zone, a region between the basal body and the ciliary axoneme. Recruited to the centriole in a TTBK2-dependent manner.</text>
</comment>
<comment type="similarity">
    <text evidence="6">Belongs to the inturned family.</text>
</comment>